<sequence length="148" mass="16430">MAASGMLISNPSNVCFRKPQFSCSLKPKATVSELGFLTSQLSGIQISPSPLFPIISKPISAPLKPSLQPVARRICPFTGKKSNKANRVSHSNHKTKRLQFVNLQYKRVWWEAGKRFVKLRLSTKALKTIEKNGLDAVAKKAGIDLRKE</sequence>
<protein>
    <recommendedName>
        <fullName evidence="5">Large ribosomal subunit protein bL28c</fullName>
    </recommendedName>
    <alternativeName>
        <fullName evidence="4">50S ribosomal protein L28, chloroplastic</fullName>
    </alternativeName>
    <alternativeName>
        <fullName>CL28</fullName>
    </alternativeName>
</protein>
<keyword id="KW-0002">3D-structure</keyword>
<keyword id="KW-0150">Chloroplast</keyword>
<keyword id="KW-0903">Direct protein sequencing</keyword>
<keyword id="KW-0934">Plastid</keyword>
<keyword id="KW-1185">Reference proteome</keyword>
<keyword id="KW-0687">Ribonucleoprotein</keyword>
<keyword id="KW-0689">Ribosomal protein</keyword>
<keyword id="KW-0809">Transit peptide</keyword>
<comment type="function">
    <text evidence="6 7">Component of the chloroplast ribosome (chloro-ribosome), a dedicated translation machinery responsible for the synthesis of chloroplast genome-encoded proteins, including proteins of the transcription and translation machinery and components of the photosynthetic apparatus.</text>
</comment>
<comment type="subunit">
    <text evidence="2 3">Component of the chloroplast large ribosomal subunit (LSU). Mature 70S chloroplast ribosomes of higher plants consist of a small (30S) and a large (50S) subunit. The 30S small subunit contains 1 molecule of ribosomal RNA (16S rRNA) and 24 different proteins. The 50S large subunit contains 3 rRNA molecules (23S, 5S and 4.5S rRNA) and 33 different proteins.</text>
</comment>
<comment type="subcellular location">
    <subcellularLocation>
        <location evidence="2 3">Plastid</location>
        <location evidence="2 3">Chloroplast</location>
    </subcellularLocation>
</comment>
<comment type="mass spectrometry" mass="9071.5" method="Electrospray" evidence="2"/>
<comment type="similarity">
    <text evidence="1">Belongs to the bacterial ribosomal protein bL28 family.</text>
</comment>
<organism>
    <name type="scientific">Spinacia oleracea</name>
    <name type="common">Spinach</name>
    <dbReference type="NCBI Taxonomy" id="3562"/>
    <lineage>
        <taxon>Eukaryota</taxon>
        <taxon>Viridiplantae</taxon>
        <taxon>Streptophyta</taxon>
        <taxon>Embryophyta</taxon>
        <taxon>Tracheophyta</taxon>
        <taxon>Spermatophyta</taxon>
        <taxon>Magnoliopsida</taxon>
        <taxon>eudicotyledons</taxon>
        <taxon>Gunneridae</taxon>
        <taxon>Pentapetalae</taxon>
        <taxon>Caryophyllales</taxon>
        <taxon>Chenopodiaceae</taxon>
        <taxon>Chenopodioideae</taxon>
        <taxon>Anserineae</taxon>
        <taxon>Spinacia</taxon>
    </lineage>
</organism>
<proteinExistence type="evidence at protein level"/>
<name>RK28_SPIOL</name>
<feature type="transit peptide" description="Chloroplast" evidence="2">
    <location>
        <begin position="1"/>
        <end position="71"/>
    </location>
</feature>
<feature type="chain" id="PRO_0000249407" description="Large ribosomal subunit protein bL28c">
    <location>
        <begin position="72"/>
        <end position="148"/>
    </location>
</feature>
<feature type="turn" evidence="8">
    <location>
        <begin position="76"/>
        <end position="78"/>
    </location>
</feature>
<feature type="strand" evidence="8">
    <location>
        <begin position="103"/>
        <end position="110"/>
    </location>
</feature>
<feature type="turn" evidence="8">
    <location>
        <begin position="111"/>
        <end position="114"/>
    </location>
</feature>
<feature type="strand" evidence="8">
    <location>
        <begin position="115"/>
        <end position="122"/>
    </location>
</feature>
<feature type="helix" evidence="8">
    <location>
        <begin position="123"/>
        <end position="132"/>
    </location>
</feature>
<feature type="helix" evidence="8">
    <location>
        <begin position="134"/>
        <end position="141"/>
    </location>
</feature>
<feature type="turn" evidence="8">
    <location>
        <begin position="145"/>
        <end position="147"/>
    </location>
</feature>
<dbReference type="EMBL" id="KQ144998">
    <property type="protein sequence ID" value="KNA16864.1"/>
    <property type="molecule type" value="Genomic_DNA"/>
</dbReference>
<dbReference type="PDB" id="4V61">
    <property type="method" value="EM"/>
    <property type="resolution" value="9.40 A"/>
    <property type="chains" value="Y=72-90"/>
</dbReference>
<dbReference type="PDB" id="5H1S">
    <property type="method" value="EM"/>
    <property type="resolution" value="3.50 A"/>
    <property type="chains" value="Y=72-148"/>
</dbReference>
<dbReference type="PDB" id="5MLC">
    <property type="method" value="EM"/>
    <property type="resolution" value="3.90 A"/>
    <property type="chains" value="Y=1-148"/>
</dbReference>
<dbReference type="PDB" id="5MMI">
    <property type="method" value="EM"/>
    <property type="resolution" value="3.25 A"/>
    <property type="chains" value="Y=1-148"/>
</dbReference>
<dbReference type="PDB" id="5MMM">
    <property type="method" value="EM"/>
    <property type="resolution" value="3.40 A"/>
    <property type="chains" value="Y=1-148"/>
</dbReference>
<dbReference type="PDB" id="5X8P">
    <property type="method" value="EM"/>
    <property type="resolution" value="3.40 A"/>
    <property type="chains" value="Y=72-148"/>
</dbReference>
<dbReference type="PDB" id="5X8T">
    <property type="method" value="EM"/>
    <property type="resolution" value="3.30 A"/>
    <property type="chains" value="Y=72-148"/>
</dbReference>
<dbReference type="PDB" id="6ERI">
    <property type="method" value="EM"/>
    <property type="resolution" value="3.00 A"/>
    <property type="chains" value="AX=72-147"/>
</dbReference>
<dbReference type="PDBsum" id="4V61"/>
<dbReference type="PDBsum" id="5H1S"/>
<dbReference type="PDBsum" id="5MLC"/>
<dbReference type="PDBsum" id="5MMI"/>
<dbReference type="PDBsum" id="5MMM"/>
<dbReference type="PDBsum" id="5X8P"/>
<dbReference type="PDBsum" id="5X8T"/>
<dbReference type="PDBsum" id="6ERI"/>
<dbReference type="EMDB" id="EMD-3525"/>
<dbReference type="EMDB" id="EMD-3531"/>
<dbReference type="EMDB" id="EMD-3533"/>
<dbReference type="EMDB" id="EMD-3941"/>
<dbReference type="EMDB" id="EMD-6709"/>
<dbReference type="EMDB" id="EMD-6711"/>
<dbReference type="EMDB" id="EMD-9572"/>
<dbReference type="SMR" id="P82245"/>
<dbReference type="IntAct" id="P82245">
    <property type="interactions" value="1"/>
</dbReference>
<dbReference type="STRING" id="3562.P82245"/>
<dbReference type="OrthoDB" id="361870at2759"/>
<dbReference type="Proteomes" id="UP001155700">
    <property type="component" value="Unplaced"/>
</dbReference>
<dbReference type="GO" id="GO:0009507">
    <property type="term" value="C:chloroplast"/>
    <property type="evidence" value="ECO:0007669"/>
    <property type="project" value="UniProtKB-SubCell"/>
</dbReference>
<dbReference type="GO" id="GO:1990904">
    <property type="term" value="C:ribonucleoprotein complex"/>
    <property type="evidence" value="ECO:0007669"/>
    <property type="project" value="UniProtKB-KW"/>
</dbReference>
<dbReference type="GO" id="GO:0005840">
    <property type="term" value="C:ribosome"/>
    <property type="evidence" value="ECO:0007669"/>
    <property type="project" value="UniProtKB-KW"/>
</dbReference>
<dbReference type="GO" id="GO:0003735">
    <property type="term" value="F:structural constituent of ribosome"/>
    <property type="evidence" value="ECO:0000318"/>
    <property type="project" value="GO_Central"/>
</dbReference>
<dbReference type="GO" id="GO:0006412">
    <property type="term" value="P:translation"/>
    <property type="evidence" value="ECO:0007669"/>
    <property type="project" value="InterPro"/>
</dbReference>
<dbReference type="FunFam" id="2.30.170.40:FF:000005">
    <property type="entry name" value="50S ribosomal L28, chloroplastic"/>
    <property type="match status" value="1"/>
</dbReference>
<dbReference type="Gene3D" id="2.30.170.40">
    <property type="entry name" value="Ribosomal protein L28/L24"/>
    <property type="match status" value="1"/>
</dbReference>
<dbReference type="HAMAP" id="MF_00373">
    <property type="entry name" value="Ribosomal_bL28"/>
    <property type="match status" value="1"/>
</dbReference>
<dbReference type="InterPro" id="IPR026569">
    <property type="entry name" value="Ribosomal_bL28"/>
</dbReference>
<dbReference type="InterPro" id="IPR034704">
    <property type="entry name" value="Ribosomal_bL28/bL31-like_sf"/>
</dbReference>
<dbReference type="InterPro" id="IPR001383">
    <property type="entry name" value="Ribosomal_bL28_bact-type"/>
</dbReference>
<dbReference type="InterPro" id="IPR037147">
    <property type="entry name" value="Ribosomal_bL28_sf"/>
</dbReference>
<dbReference type="NCBIfam" id="TIGR00009">
    <property type="entry name" value="L28"/>
    <property type="match status" value="1"/>
</dbReference>
<dbReference type="PANTHER" id="PTHR13528">
    <property type="entry name" value="39S RIBOSOMAL PROTEIN L28, MITOCHONDRIAL"/>
    <property type="match status" value="1"/>
</dbReference>
<dbReference type="PANTHER" id="PTHR13528:SF2">
    <property type="entry name" value="LARGE RIBOSOMAL SUBUNIT PROTEIN BL28M"/>
    <property type="match status" value="1"/>
</dbReference>
<dbReference type="Pfam" id="PF00830">
    <property type="entry name" value="Ribosomal_L28"/>
    <property type="match status" value="1"/>
</dbReference>
<dbReference type="SUPFAM" id="SSF143800">
    <property type="entry name" value="L28p-like"/>
    <property type="match status" value="1"/>
</dbReference>
<evidence type="ECO:0000255" key="1"/>
<evidence type="ECO:0000269" key="2">
    <source>
    </source>
</evidence>
<evidence type="ECO:0000269" key="3">
    <source>
    </source>
</evidence>
<evidence type="ECO:0000303" key="4">
    <source>
    </source>
</evidence>
<evidence type="ECO:0000303" key="5">
    <source>
    </source>
</evidence>
<evidence type="ECO:0000305" key="6">
    <source>
    </source>
</evidence>
<evidence type="ECO:0000305" key="7">
    <source>
    </source>
</evidence>
<evidence type="ECO:0007829" key="8">
    <source>
        <dbReference type="PDB" id="5MMI"/>
    </source>
</evidence>
<accession>P82245</accession>
<accession>A0A0K9RD02</accession>
<reference key="1">
    <citation type="journal article" date="2014" name="Nature">
        <title>The genome of the recently domesticated crop plant sugar beet (Beta vulgaris).</title>
        <authorList>
            <person name="Dohm J.C."/>
            <person name="Minoche A.E."/>
            <person name="Holtgraewe D."/>
            <person name="Capella-Gutierrez S."/>
            <person name="Zakrzewski F."/>
            <person name="Tafer H."/>
            <person name="Rupp O."/>
            <person name="Soerensen T.R."/>
            <person name="Stracke R."/>
            <person name="Reinhardt R."/>
            <person name="Goesmann A."/>
            <person name="Kraft T."/>
            <person name="Schulz B."/>
            <person name="Stadler P.F."/>
            <person name="Schmidt T."/>
            <person name="Gabaldon T."/>
            <person name="Lehrach H."/>
            <person name="Weisshaar B."/>
            <person name="Himmelbauer H."/>
        </authorList>
    </citation>
    <scope>NUCLEOTIDE SEQUENCE [LARGE SCALE GENOMIC DNA]</scope>
    <source>
        <strain>cv. Viroflay</strain>
        <tissue>Leaf</tissue>
    </source>
</reference>
<reference key="2">
    <citation type="journal article" date="2000" name="J. Biol. Chem.">
        <title>The plastid ribosomal proteins. Identification of all the proteins in the 50S subunit of an organelle ribosome (chloroplast).</title>
        <authorList>
            <person name="Yamaguchi K."/>
            <person name="Subramanian A.R."/>
        </authorList>
    </citation>
    <scope>PROTEIN SEQUENCE OF 72-90</scope>
    <scope>SUBUNIT</scope>
    <scope>SUBCELLULAR LOCATION</scope>
    <scope>MASS SPECTROMETRY</scope>
    <source>
        <strain>cv. Alwaro</strain>
        <tissue>Leaf</tissue>
    </source>
</reference>
<reference key="3">
    <citation type="journal article" date="2007" name="Proc. Natl. Acad. Sci. U.S.A.">
        <title>Cryo-EM study of the spinach chloroplast ribosome reveals the structural and functional roles of plastid-specific ribosomal proteins.</title>
        <authorList>
            <person name="Sharma M.R."/>
            <person name="Wilson D.N."/>
            <person name="Datta P.P."/>
            <person name="Barat C."/>
            <person name="Schluenzen F."/>
            <person name="Fucini P."/>
            <person name="Agrawal R.K."/>
        </authorList>
    </citation>
    <scope>STRUCTURE BY ELECTRON MICROSCOPY (9.4 ANGSTROMS)</scope>
</reference>
<reference key="4">
    <citation type="journal article" date="2016" name="Sci. Rep.">
        <title>Cryo-EM structure of the large subunit of the spinach chloroplast ribosome.</title>
        <authorList>
            <person name="Ahmed T."/>
            <person name="Yin Z."/>
            <person name="Bhushan S."/>
        </authorList>
    </citation>
    <scope>STRUCTURE BY ELECTRON MICROSCOPY (3.50 ANGSTROMS)</scope>
</reference>
<reference key="5">
    <citation type="journal article" date="2017" name="EMBO J.">
        <title>The complete structure of the chloroplast 70S ribosome in complex with translation factor pY.</title>
        <authorList>
            <person name="Bieri P."/>
            <person name="Leibundgut M."/>
            <person name="Saurer M."/>
            <person name="Boehringer D."/>
            <person name="Ban N."/>
        </authorList>
    </citation>
    <scope>STRUCTURE BY ELECTRON MICROSCOPY (3.25 ANGSTROMS)</scope>
    <scope>SUBUNIT</scope>
    <scope>SUBCELLULAR LOCATION</scope>
</reference>
<gene>
    <name type="primary">RPL28</name>
    <name type="ORF">SOVF_085320</name>
</gene>